<protein>
    <recommendedName>
        <fullName evidence="1">Glycine--tRNA ligase alpha subunit</fullName>
        <ecNumber evidence="1">6.1.1.14</ecNumber>
    </recommendedName>
    <alternativeName>
        <fullName evidence="1">Glycyl-tRNA synthetase alpha subunit</fullName>
        <shortName evidence="1">GlyRS</shortName>
    </alternativeName>
</protein>
<organism>
    <name type="scientific">Streptococcus pyogenes serotype M3 (strain SSI-1)</name>
    <dbReference type="NCBI Taxonomy" id="193567"/>
    <lineage>
        <taxon>Bacteria</taxon>
        <taxon>Bacillati</taxon>
        <taxon>Bacillota</taxon>
        <taxon>Bacilli</taxon>
        <taxon>Lactobacillales</taxon>
        <taxon>Streptococcaceae</taxon>
        <taxon>Streptococcus</taxon>
    </lineage>
</organism>
<name>SYGA_STRPQ</name>
<reference key="1">
    <citation type="journal article" date="2003" name="Genome Res.">
        <title>Genome sequence of an M3 strain of Streptococcus pyogenes reveals a large-scale genomic rearrangement in invasive strains and new insights into phage evolution.</title>
        <authorList>
            <person name="Nakagawa I."/>
            <person name="Kurokawa K."/>
            <person name="Yamashita A."/>
            <person name="Nakata M."/>
            <person name="Tomiyasu Y."/>
            <person name="Okahashi N."/>
            <person name="Kawabata S."/>
            <person name="Yamazaki K."/>
            <person name="Shiba T."/>
            <person name="Yasunaga T."/>
            <person name="Hayashi H."/>
            <person name="Hattori M."/>
            <person name="Hamada S."/>
        </authorList>
    </citation>
    <scope>NUCLEOTIDE SEQUENCE [LARGE SCALE GENOMIC DNA]</scope>
    <source>
        <strain>SSI-1</strain>
    </source>
</reference>
<feature type="chain" id="PRO_0000411608" description="Glycine--tRNA ligase alpha subunit">
    <location>
        <begin position="1"/>
        <end position="308"/>
    </location>
</feature>
<evidence type="ECO:0000255" key="1">
    <source>
        <dbReference type="HAMAP-Rule" id="MF_00254"/>
    </source>
</evidence>
<comment type="catalytic activity">
    <reaction evidence="1">
        <text>tRNA(Gly) + glycine + ATP = glycyl-tRNA(Gly) + AMP + diphosphate</text>
        <dbReference type="Rhea" id="RHEA:16013"/>
        <dbReference type="Rhea" id="RHEA-COMP:9664"/>
        <dbReference type="Rhea" id="RHEA-COMP:9683"/>
        <dbReference type="ChEBI" id="CHEBI:30616"/>
        <dbReference type="ChEBI" id="CHEBI:33019"/>
        <dbReference type="ChEBI" id="CHEBI:57305"/>
        <dbReference type="ChEBI" id="CHEBI:78442"/>
        <dbReference type="ChEBI" id="CHEBI:78522"/>
        <dbReference type="ChEBI" id="CHEBI:456215"/>
        <dbReference type="EC" id="6.1.1.14"/>
    </reaction>
</comment>
<comment type="subunit">
    <text evidence="1">Tetramer of two alpha and two beta subunits.</text>
</comment>
<comment type="subcellular location">
    <subcellularLocation>
        <location evidence="1">Cytoplasm</location>
    </subcellularLocation>
</comment>
<comment type="similarity">
    <text evidence="1">Belongs to the class-II aminoacyl-tRNA synthetase family.</text>
</comment>
<proteinExistence type="inferred from homology"/>
<sequence>MSKKLTFQEIILTLQQYWNDQGCMLMQAYDNEKGAGTMSPYTFLRAIGPEPWNAAYVEPSRRPADGRYGENPNRLYQHHQFQVVMKPSPSNIQELYLASLEKLGINPLEHDIRFVEDNWENPSTGSAGLGWEVWLDGMEITQFTYFQQVGGLATSPVTAEVTYGLERLASYIQEVDSVYDIEWAPGVKYGEIFLQPEYEHSKYSFEISDQDMLLENFEKFEKEASRALEEGLVHPAYDYVLKCSHTFNLLDARGAVSVTERAGYIARIRNLARVVAKTFVAERKKLGFPLLDEATRAILLAEDANKSI</sequence>
<dbReference type="EC" id="6.1.1.14" evidence="1"/>
<dbReference type="EMBL" id="BA000034">
    <property type="protein sequence ID" value="BAC63489.1"/>
    <property type="molecule type" value="Genomic_DNA"/>
</dbReference>
<dbReference type="RefSeq" id="WP_011054912.1">
    <property type="nucleotide sequence ID" value="NC_004606.1"/>
</dbReference>
<dbReference type="SMR" id="P0DG37"/>
<dbReference type="KEGG" id="sps:SPs0394"/>
<dbReference type="HOGENOM" id="CLU_057066_1_0_9"/>
<dbReference type="GO" id="GO:0005829">
    <property type="term" value="C:cytosol"/>
    <property type="evidence" value="ECO:0007669"/>
    <property type="project" value="TreeGrafter"/>
</dbReference>
<dbReference type="GO" id="GO:0005524">
    <property type="term" value="F:ATP binding"/>
    <property type="evidence" value="ECO:0007669"/>
    <property type="project" value="UniProtKB-UniRule"/>
</dbReference>
<dbReference type="GO" id="GO:0140096">
    <property type="term" value="F:catalytic activity, acting on a protein"/>
    <property type="evidence" value="ECO:0007669"/>
    <property type="project" value="UniProtKB-ARBA"/>
</dbReference>
<dbReference type="GO" id="GO:0004820">
    <property type="term" value="F:glycine-tRNA ligase activity"/>
    <property type="evidence" value="ECO:0007669"/>
    <property type="project" value="UniProtKB-UniRule"/>
</dbReference>
<dbReference type="GO" id="GO:0016740">
    <property type="term" value="F:transferase activity"/>
    <property type="evidence" value="ECO:0007669"/>
    <property type="project" value="UniProtKB-ARBA"/>
</dbReference>
<dbReference type="GO" id="GO:0006426">
    <property type="term" value="P:glycyl-tRNA aminoacylation"/>
    <property type="evidence" value="ECO:0007669"/>
    <property type="project" value="UniProtKB-UniRule"/>
</dbReference>
<dbReference type="CDD" id="cd00733">
    <property type="entry name" value="GlyRS_alpha_core"/>
    <property type="match status" value="1"/>
</dbReference>
<dbReference type="FunFam" id="3.30.930.10:FF:000006">
    <property type="entry name" value="Glycine--tRNA ligase alpha subunit"/>
    <property type="match status" value="1"/>
</dbReference>
<dbReference type="Gene3D" id="3.30.930.10">
    <property type="entry name" value="Bira Bifunctional Protein, Domain 2"/>
    <property type="match status" value="1"/>
</dbReference>
<dbReference type="Gene3D" id="1.20.58.180">
    <property type="entry name" value="Class II aaRS and biotin synthetases, domain 2"/>
    <property type="match status" value="1"/>
</dbReference>
<dbReference type="HAMAP" id="MF_00254">
    <property type="entry name" value="Gly_tRNA_synth_alpha"/>
    <property type="match status" value="1"/>
</dbReference>
<dbReference type="InterPro" id="IPR045864">
    <property type="entry name" value="aa-tRNA-synth_II/BPL/LPL"/>
</dbReference>
<dbReference type="InterPro" id="IPR006194">
    <property type="entry name" value="Gly-tRNA-synth_heterodimer"/>
</dbReference>
<dbReference type="InterPro" id="IPR002310">
    <property type="entry name" value="Gly-tRNA_ligase_asu"/>
</dbReference>
<dbReference type="NCBIfam" id="TIGR00388">
    <property type="entry name" value="glyQ"/>
    <property type="match status" value="1"/>
</dbReference>
<dbReference type="NCBIfam" id="NF006827">
    <property type="entry name" value="PRK09348.1"/>
    <property type="match status" value="1"/>
</dbReference>
<dbReference type="PANTHER" id="PTHR30075:SF2">
    <property type="entry name" value="GLYCINE--TRNA LIGASE, CHLOROPLASTIC_MITOCHONDRIAL 2"/>
    <property type="match status" value="1"/>
</dbReference>
<dbReference type="PANTHER" id="PTHR30075">
    <property type="entry name" value="GLYCYL-TRNA SYNTHETASE"/>
    <property type="match status" value="1"/>
</dbReference>
<dbReference type="Pfam" id="PF02091">
    <property type="entry name" value="tRNA-synt_2e"/>
    <property type="match status" value="1"/>
</dbReference>
<dbReference type="PRINTS" id="PR01044">
    <property type="entry name" value="TRNASYNTHGA"/>
</dbReference>
<dbReference type="SUPFAM" id="SSF55681">
    <property type="entry name" value="Class II aaRS and biotin synthetases"/>
    <property type="match status" value="1"/>
</dbReference>
<dbReference type="PROSITE" id="PS50861">
    <property type="entry name" value="AA_TRNA_LIGASE_II_GLYAB"/>
    <property type="match status" value="1"/>
</dbReference>
<keyword id="KW-0030">Aminoacyl-tRNA synthetase</keyword>
<keyword id="KW-0067">ATP-binding</keyword>
<keyword id="KW-0963">Cytoplasm</keyword>
<keyword id="KW-0436">Ligase</keyword>
<keyword id="KW-0547">Nucleotide-binding</keyword>
<keyword id="KW-0648">Protein biosynthesis</keyword>
<gene>
    <name evidence="1" type="primary">glyQ</name>
    <name type="ordered locus">SPs0394</name>
</gene>
<accession>P0DG37</accession>
<accession>Q8K662</accession>